<reference key="1">
    <citation type="journal article" date="1992" name="Dev. Biol.">
        <title>A novel homeobox gene expressed in the anterior neural plate of the Xenopus embryo.</title>
        <authorList>
            <person name="Zaraisky A.G."/>
            <person name="Lukyanov S.A."/>
            <person name="Vasiliev O.L."/>
            <person name="Smirnov Y.V."/>
            <person name="Belyavsky A.V."/>
            <person name="Kazanskaya O.V."/>
        </authorList>
    </citation>
    <scope>NUCLEOTIDE SEQUENCE [MRNA]</scope>
    <scope>FUNCTION</scope>
    <scope>TISSUE SPECIFICITY</scope>
    <source>
        <tissue>Ectoderm</tissue>
        <tissue>Gastrula</tissue>
    </source>
</reference>
<reference key="2">
    <citation type="submission" date="2009-03" db="EMBL/GenBank/DDBJ databases">
        <authorList>
            <person name="Zaraisky A.G."/>
        </authorList>
    </citation>
    <scope>SEQUENCE REVISION</scope>
</reference>
<reference key="3">
    <citation type="journal article" date="1994" name="Dokl. Akad. Nauk">
        <title>Genomic structure of the homeo box-containing gene XANF1.</title>
        <authorList>
            <person name="Samokhvalov I.M."/>
            <person name="Semenova N.A."/>
            <person name="Nikolaev A.I."/>
            <person name="Beliavskii A.V."/>
        </authorList>
    </citation>
    <scope>NUCLEOTIDE SEQUENCE [GENOMIC DNA]</scope>
</reference>
<reference key="4">
    <citation type="journal article" date="1995" name="Development">
        <title>The homeobox-containing gene XANF-1 may control development of the Spemann organizer.</title>
        <authorList>
            <person name="Zaraisky A.G."/>
            <person name="Ecochard V."/>
            <person name="Kazanskaya O.V."/>
            <person name="Lukyanov S.A."/>
            <person name="Fesenko I.V."/>
            <person name="Duprat A.-M."/>
        </authorList>
    </citation>
    <scope>FUNCTION</scope>
    <scope>TISSUE SPECIFICITY</scope>
</reference>
<reference key="5">
    <citation type="journal article" date="1997" name="Gene">
        <title>Anf: a novel class of vertebrate homeobox genes expressed at the anterior end of the main embryonic axis.</title>
        <authorList>
            <person name="Kazanskaya O.V."/>
            <person name="Severtzova E.A."/>
            <person name="Barth K.A."/>
            <person name="Ermakova G.V."/>
            <person name="Lukyanov S.A."/>
            <person name="Benyumov A.O."/>
            <person name="Pannese M."/>
            <person name="Boncinelli E."/>
            <person name="Wilson S.W."/>
            <person name="Zaraisky A.G."/>
        </authorList>
    </citation>
    <scope>TISSUE SPECIFICITY</scope>
</reference>
<reference key="6">
    <citation type="journal article" date="1999" name="Development">
        <title>The homeobox gene, Xanf-1, can control both neural differentiation and patterning in the presumptive anterior neurectoderm of the Xenopus laevis embryo.</title>
        <authorList>
            <person name="Ermakova G.V."/>
            <person name="Alexandrova E.M."/>
            <person name="Kazanskaya O.V."/>
            <person name="Vasiliev O.L."/>
            <person name="Smith M.W."/>
            <person name="Zaraisky A.G."/>
        </authorList>
    </citation>
    <scope>FUNCTION</scope>
</reference>
<reference key="7">
    <citation type="journal article" date="2002" name="Gene">
        <title>Characterization of cis-regulatory elements of the homeobox gene Xanf-1.</title>
        <authorList>
            <person name="Eroshkin F."/>
            <person name="Kazanskaya O."/>
            <person name="Martynova N."/>
            <person name="Zaraisky A."/>
        </authorList>
    </citation>
    <scope>TISSUE SPECIFICITY</scope>
</reference>
<reference key="8">
    <citation type="journal article" date="2004" name="Development">
        <title>Patterning the forebrain: FoxA4a/Pintallavis and Xvent2 determine the posterior limit of Xanf1 expression in the neural plate.</title>
        <authorList>
            <person name="Martynova N."/>
            <person name="Eroshkin F."/>
            <person name="Ermakova G."/>
            <person name="Bayramov A."/>
            <person name="Gray J."/>
            <person name="Grainger R."/>
            <person name="Zaraisky A."/>
        </authorList>
    </citation>
    <scope>TISSUE SPECIFICITY</scope>
</reference>
<reference key="9">
    <citation type="journal article" date="2004" name="Mech. Dev.">
        <title>The homeodomain-containing transcription factor X-nkx-5.1 inhibits expression of the homeobox gene Xanf-1 during the Xenopus laevis forebrain development.</title>
        <authorList>
            <person name="Bayramov A.V."/>
            <person name="Martynova N.Y."/>
            <person name="Eroshkin F.M."/>
            <person name="Ermakova G.V."/>
            <person name="Zaraisky A.G."/>
        </authorList>
    </citation>
    <scope>TISSUE SPECIFICITY</scope>
</reference>
<reference key="10">
    <citation type="journal article" date="2007" name="Dev. Biol.">
        <title>The homeodomain factor Xanf represses expression of genes in the presumptive rostral forebrain that specify more caudal brain regions.</title>
        <authorList>
            <person name="Ermakova G.V."/>
            <person name="Solovieva E.A."/>
            <person name="Martynova N.Y."/>
            <person name="Zaraisky A.G."/>
        </authorList>
    </citation>
    <scope>FUNCTION</scope>
</reference>
<reference key="11">
    <citation type="journal article" date="2008" name="Dev. Dyn.">
        <title>The LIM-domain protein zyxin binds the homeodomain factor Xanf1/Hesx1 and modulates its activity in the anterior neural plate of Xenopus laevis embryo.</title>
        <authorList>
            <person name="Martynova N.Y."/>
            <person name="Eroshkin F.M."/>
            <person name="Ermolina L.V."/>
            <person name="Ermakova G.V."/>
            <person name="Korotaeva A.L."/>
            <person name="Smurova K.M."/>
            <person name="Gyoeva F.K."/>
            <person name="Zaraisky A.G."/>
        </authorList>
    </citation>
    <scope>INTERACTION WITH ZYX</scope>
    <scope>SUBCELLULAR LOCATION</scope>
</reference>
<sequence>MSPALQKGSSLMENRSPPSSFSIEHILGLDKKTDVASSPIIKHHRPWIECSSKGVVNGTCWQIPVIACDLPIQVHAVHRSEEEETKIRLEKCFGDEDRLTYKRELSWYRGRRPRTAFTRSQIEILENVFRVNSYPGIDVREELASKLALDEDRIQIWFQNRRAKLKRSHRESQFLIVKDSLSSKIQE</sequence>
<gene>
    <name type="primary">hesx1-b</name>
    <name type="synonym">anf-1</name>
    <name type="synonym">anf1</name>
</gene>
<feature type="chain" id="PRO_0000048926" description="Homeobox expressed in ES cells 1-B">
    <location>
        <begin position="1"/>
        <end position="187"/>
    </location>
</feature>
<feature type="DNA-binding region" description="Homeobox" evidence="1">
    <location>
        <begin position="110"/>
        <end position="169"/>
    </location>
</feature>
<feature type="sequence conflict" description="In Ref. 1; CAA42695." evidence="11" ref="1">
    <original>N</original>
    <variation>D</variation>
    <location>
        <position position="57"/>
    </location>
</feature>
<feature type="sequence conflict" description="In Ref. 1; CAA42695." evidence="11" ref="1">
    <original>C</original>
    <variation>F</variation>
    <location>
        <position position="60"/>
    </location>
</feature>
<keyword id="KW-0217">Developmental protein</keyword>
<keyword id="KW-0238">DNA-binding</keyword>
<keyword id="KW-0371">Homeobox</keyword>
<keyword id="KW-0539">Nucleus</keyword>
<keyword id="KW-1185">Reference proteome</keyword>
<dbReference type="EMBL" id="X60099">
    <property type="protein sequence ID" value="CAA42695.2"/>
    <property type="molecule type" value="mRNA"/>
</dbReference>
<dbReference type="EMBL" id="X70282">
    <property type="protein sequence ID" value="CAA49768.1"/>
    <property type="molecule type" value="Genomic_DNA"/>
</dbReference>
<dbReference type="PIR" id="S31859">
    <property type="entry name" value="S31859"/>
</dbReference>
<dbReference type="RefSeq" id="NP_001156042.1">
    <property type="nucleotide sequence ID" value="NM_001162570.1"/>
</dbReference>
<dbReference type="SMR" id="Q91898"/>
<dbReference type="IntAct" id="Q91898">
    <property type="interactions" value="4"/>
</dbReference>
<dbReference type="GeneID" id="397950"/>
<dbReference type="KEGG" id="xla:397950"/>
<dbReference type="AGR" id="Xenbase:XB-GENE-864952"/>
<dbReference type="CTD" id="397950"/>
<dbReference type="Xenbase" id="XB-GENE-864952">
    <property type="gene designation" value="hesx1.L"/>
</dbReference>
<dbReference type="OrthoDB" id="6159439at2759"/>
<dbReference type="Proteomes" id="UP000186698">
    <property type="component" value="Chromosome 4L"/>
</dbReference>
<dbReference type="Bgee" id="397950">
    <property type="expression patterns" value="Expressed in neurula embryo and 2 other cell types or tissues"/>
</dbReference>
<dbReference type="GO" id="GO:0005634">
    <property type="term" value="C:nucleus"/>
    <property type="evidence" value="ECO:0000314"/>
    <property type="project" value="UniProtKB"/>
</dbReference>
<dbReference type="GO" id="GO:0001227">
    <property type="term" value="F:DNA-binding transcription repressor activity, RNA polymerase II-specific"/>
    <property type="evidence" value="ECO:0000318"/>
    <property type="project" value="GO_Central"/>
</dbReference>
<dbReference type="GO" id="GO:0030274">
    <property type="term" value="F:LIM domain binding"/>
    <property type="evidence" value="ECO:0000314"/>
    <property type="project" value="UniProtKB"/>
</dbReference>
<dbReference type="GO" id="GO:0000978">
    <property type="term" value="F:RNA polymerase II cis-regulatory region sequence-specific DNA binding"/>
    <property type="evidence" value="ECO:0000318"/>
    <property type="project" value="GO_Central"/>
</dbReference>
<dbReference type="GO" id="GO:0001221">
    <property type="term" value="F:transcription coregulator binding"/>
    <property type="evidence" value="ECO:0000353"/>
    <property type="project" value="UniProtKB"/>
</dbReference>
<dbReference type="GO" id="GO:0030900">
    <property type="term" value="P:forebrain development"/>
    <property type="evidence" value="ECO:0000315"/>
    <property type="project" value="UniProtKB"/>
</dbReference>
<dbReference type="GO" id="GO:0045892">
    <property type="term" value="P:negative regulation of DNA-templated transcription"/>
    <property type="evidence" value="ECO:0000315"/>
    <property type="project" value="UniProtKB"/>
</dbReference>
<dbReference type="GO" id="GO:0000122">
    <property type="term" value="P:negative regulation of transcription by RNA polymerase II"/>
    <property type="evidence" value="ECO:0000315"/>
    <property type="project" value="UniProtKB"/>
</dbReference>
<dbReference type="GO" id="GO:0021983">
    <property type="term" value="P:pituitary gland development"/>
    <property type="evidence" value="ECO:0000318"/>
    <property type="project" value="GO_Central"/>
</dbReference>
<dbReference type="GO" id="GO:0045664">
    <property type="term" value="P:regulation of neuron differentiation"/>
    <property type="evidence" value="ECO:0000315"/>
    <property type="project" value="UniProtKB"/>
</dbReference>
<dbReference type="GO" id="GO:0006357">
    <property type="term" value="P:regulation of transcription by RNA polymerase II"/>
    <property type="evidence" value="ECO:0000318"/>
    <property type="project" value="GO_Central"/>
</dbReference>
<dbReference type="GO" id="GO:0060061">
    <property type="term" value="P:Spemann organizer formation"/>
    <property type="evidence" value="ECO:0000315"/>
    <property type="project" value="UniProtKB"/>
</dbReference>
<dbReference type="CDD" id="cd00086">
    <property type="entry name" value="homeodomain"/>
    <property type="match status" value="1"/>
</dbReference>
<dbReference type="FunFam" id="1.10.10.60:FF:000214">
    <property type="entry name" value="Homeobox expressed in ES cells 1"/>
    <property type="match status" value="1"/>
</dbReference>
<dbReference type="Gene3D" id="1.10.10.60">
    <property type="entry name" value="Homeodomain-like"/>
    <property type="match status" value="1"/>
</dbReference>
<dbReference type="InterPro" id="IPR001356">
    <property type="entry name" value="HD"/>
</dbReference>
<dbReference type="InterPro" id="IPR043402">
    <property type="entry name" value="Hesx1"/>
</dbReference>
<dbReference type="InterPro" id="IPR017970">
    <property type="entry name" value="Homeobox_CS"/>
</dbReference>
<dbReference type="InterPro" id="IPR009057">
    <property type="entry name" value="Homeodomain-like_sf"/>
</dbReference>
<dbReference type="PANTHER" id="PTHR46966">
    <property type="entry name" value="HOMEOBOX EXPRESSED IN ES CELLS 1"/>
    <property type="match status" value="1"/>
</dbReference>
<dbReference type="PANTHER" id="PTHR46966:SF1">
    <property type="entry name" value="HOMEOBOX EXPRESSED IN ES CELLS 1"/>
    <property type="match status" value="1"/>
</dbReference>
<dbReference type="Pfam" id="PF00046">
    <property type="entry name" value="Homeodomain"/>
    <property type="match status" value="1"/>
</dbReference>
<dbReference type="SMART" id="SM00389">
    <property type="entry name" value="HOX"/>
    <property type="match status" value="1"/>
</dbReference>
<dbReference type="SUPFAM" id="SSF46689">
    <property type="entry name" value="Homeodomain-like"/>
    <property type="match status" value="1"/>
</dbReference>
<dbReference type="PROSITE" id="PS00027">
    <property type="entry name" value="HOMEOBOX_1"/>
    <property type="match status" value="1"/>
</dbReference>
<dbReference type="PROSITE" id="PS50071">
    <property type="entry name" value="HOMEOBOX_2"/>
    <property type="match status" value="1"/>
</dbReference>
<protein>
    <recommendedName>
        <fullName>Homeobox expressed in ES cells 1-B</fullName>
    </recommendedName>
    <alternativeName>
        <fullName>Homeobox protein ANF-1</fullName>
        <shortName>XANF-1</shortName>
        <shortName>Xanf1</shortName>
    </alternativeName>
</protein>
<proteinExistence type="evidence at protein level"/>
<evidence type="ECO:0000255" key="1">
    <source>
        <dbReference type="PROSITE-ProRule" id="PRU00108"/>
    </source>
</evidence>
<evidence type="ECO:0000269" key="2">
    <source>
    </source>
</evidence>
<evidence type="ECO:0000269" key="3">
    <source>
    </source>
</evidence>
<evidence type="ECO:0000269" key="4">
    <source>
    </source>
</evidence>
<evidence type="ECO:0000269" key="5">
    <source>
    </source>
</evidence>
<evidence type="ECO:0000269" key="6">
    <source>
    </source>
</evidence>
<evidence type="ECO:0000269" key="7">
    <source>
    </source>
</evidence>
<evidence type="ECO:0000269" key="8">
    <source>
    </source>
</evidence>
<evidence type="ECO:0000269" key="9">
    <source>
    </source>
</evidence>
<evidence type="ECO:0000269" key="10">
    <source>
    </source>
</evidence>
<evidence type="ECO:0000305" key="11"/>
<organism>
    <name type="scientific">Xenopus laevis</name>
    <name type="common">African clawed frog</name>
    <dbReference type="NCBI Taxonomy" id="8355"/>
    <lineage>
        <taxon>Eukaryota</taxon>
        <taxon>Metazoa</taxon>
        <taxon>Chordata</taxon>
        <taxon>Craniata</taxon>
        <taxon>Vertebrata</taxon>
        <taxon>Euteleostomi</taxon>
        <taxon>Amphibia</taxon>
        <taxon>Batrachia</taxon>
        <taxon>Anura</taxon>
        <taxon>Pipoidea</taxon>
        <taxon>Pipidae</taxon>
        <taxon>Xenopodinae</taxon>
        <taxon>Xenopus</taxon>
        <taxon>Xenopus</taxon>
    </lineage>
</organism>
<accession>Q91898</accession>
<accession>Q91899</accession>
<name>HESXB_XENLA</name>
<comment type="function">
    <text evidence="2 4 7 9">Regulates the earliest stages of development of the anterior neural plate. Plays a role in forebrain development by inhibiting the expression of otx2 and pax6 in the rostral region of the anterior neural plate. Necessary for both neural differentiation and neural patterning. Controls Spemann organizer development. May act as a transcriptional repressor.</text>
</comment>
<comment type="subunit">
    <text evidence="8">The N-terminus interacts with the LIM 2 domain of zyx.</text>
</comment>
<comment type="interaction">
    <interactant intactId="EBI-5651634">
        <id>Q91898</id>
    </interactant>
    <interactant intactId="EBI-5651620">
        <id>A5H447</id>
        <label>zyx</label>
    </interactant>
    <organismsDiffer>false</organismsDiffer>
    <experiments>5</experiments>
</comment>
<comment type="subcellular location">
    <subcellularLocation>
        <location evidence="1 8">Nucleus</location>
    </subcellularLocation>
    <text>Enters the cytoplasm in the presence of zyx.</text>
</comment>
<comment type="tissue specificity">
    <text evidence="3 4 5 6 9 10">First expressed at a low level in the late blastula stage (stage 9) in most cells of the animal half of the embryo. Following this, predominantly expressed in two zones; the dorsal blastopore lip (Spemann organizer) at the beginning of gastrulation, and subsequently in the anterior part of the neural anlage (the region of future forebrain).</text>
</comment>
<comment type="similarity">
    <text evidence="11">Belongs to the ANF homeobox family.</text>
</comment>